<gene>
    <name evidence="1" type="primary">valS</name>
    <name type="ordered locus">PAM_018</name>
</gene>
<organism>
    <name type="scientific">Onion yellows phytoplasma (strain OY-M)</name>
    <dbReference type="NCBI Taxonomy" id="262768"/>
    <lineage>
        <taxon>Bacteria</taxon>
        <taxon>Bacillati</taxon>
        <taxon>Mycoplasmatota</taxon>
        <taxon>Mollicutes</taxon>
        <taxon>Acholeplasmatales</taxon>
        <taxon>Acholeplasmataceae</taxon>
        <taxon>Candidatus Phytoplasma</taxon>
        <taxon>16SrI (Aster yellows group)</taxon>
    </lineage>
</organism>
<keyword id="KW-0030">Aminoacyl-tRNA synthetase</keyword>
<keyword id="KW-0067">ATP-binding</keyword>
<keyword id="KW-0175">Coiled coil</keyword>
<keyword id="KW-0963">Cytoplasm</keyword>
<keyword id="KW-0436">Ligase</keyword>
<keyword id="KW-0547">Nucleotide-binding</keyword>
<keyword id="KW-0648">Protein biosynthesis</keyword>
<feature type="chain" id="PRO_0000224522" description="Valine--tRNA ligase">
    <location>
        <begin position="1"/>
        <end position="882"/>
    </location>
</feature>
<feature type="coiled-coil region" evidence="1">
    <location>
        <begin position="849"/>
        <end position="873"/>
    </location>
</feature>
<feature type="short sequence motif" description="'HIGH' region">
    <location>
        <begin position="42"/>
        <end position="52"/>
    </location>
</feature>
<feature type="short sequence motif" description="'KMSKS' region">
    <location>
        <begin position="522"/>
        <end position="526"/>
    </location>
</feature>
<feature type="binding site" evidence="1">
    <location>
        <position position="525"/>
    </location>
    <ligand>
        <name>ATP</name>
        <dbReference type="ChEBI" id="CHEBI:30616"/>
    </ligand>
</feature>
<protein>
    <recommendedName>
        <fullName evidence="1">Valine--tRNA ligase</fullName>
        <ecNumber evidence="1">6.1.1.9</ecNumber>
    </recommendedName>
    <alternativeName>
        <fullName evidence="1">Valyl-tRNA synthetase</fullName>
        <shortName evidence="1">ValRS</shortName>
    </alternativeName>
</protein>
<evidence type="ECO:0000255" key="1">
    <source>
        <dbReference type="HAMAP-Rule" id="MF_02004"/>
    </source>
</evidence>
<evidence type="ECO:0000305" key="2"/>
<sequence>MQTKYDFKKVEHQRYQQWLEKKYFCANPNANKKTFTVVIPPPNVTGKLHLGHAWNNTIQDIIIRFKKMQGFDVLFLPGMDHAGIATQNKVKEQLKQEGLLTKTLSKEIFLKYAWQWKEEHAQNIRQQWQVLGLHLDYNFEKFTLDPDLSQQVQEVFGKLFQKKLIYRDYKIINWDPETKTALSNVEVNYHETEGKLYYIKYFLVDFPTNSNLSDASLVPSFLEIATTRPETMFADQALMVNPNDPRYQSFIGKKVFIPDTNIQIPVISDNYVDINFGTGVVKVTPGHDINDFEVAKRHQLKALLCMNEDGTMNDLALQYQGLDRFVCRQKLVQTLKQKGFFTKTENHLHKVGYSSISDAIIEPRLSLQWVLKTKAIAQIALKTNKINFFPLRFENIFNNWLQNIEDWCISRQLWWGHQIPAWHKGQEIKVQIESPGPEWSLDCDVLDTWFSSALWPFSTLGWPNCNAPLFQNRFPTDVLVTGYDILTFWVSKMVFQSILLTHKDPFKDVLLHGLVRDNKGQKMSKSKGNGVDPLEVVAKYGTDALRWFLTTNAAPGFDLFYDETKVASSWNFINKLWNISRFVKLNTSTLDTDFDINLLTLTQKALLTQLHLTTQKVTTLYQKYELKEIGKILYHFVWEDFANWHLEFAKHDLDQNNSNLTNLHNSQKFLVYMMKHILQLLHPFIPFVTDALYENFDNKTNITQTTLQKTSYCNLDALADFENLKNLIIKTRHLRQESNINCKLNLELEVASQFSTILQDFVNLQQALEKFFKTLQIKITNKVTNSKKTIWLIEKNLSLYIDRKTLNELNETKFESNFLQQKNTLLKEIKRSETILNNPSFLQKAASAKIEIEKKKYESYCKQYKKLLESKNNSNPLNPNKK</sequence>
<proteinExistence type="inferred from homology"/>
<comment type="function">
    <text evidence="1">Catalyzes the attachment of valine to tRNA(Val). As ValRS can inadvertently accommodate and process structurally similar amino acids such as threonine, to avoid such errors, it has a 'posttransfer' editing activity that hydrolyzes mischarged Thr-tRNA(Val) in a tRNA-dependent manner.</text>
</comment>
<comment type="catalytic activity">
    <reaction evidence="1">
        <text>tRNA(Val) + L-valine + ATP = L-valyl-tRNA(Val) + AMP + diphosphate</text>
        <dbReference type="Rhea" id="RHEA:10704"/>
        <dbReference type="Rhea" id="RHEA-COMP:9672"/>
        <dbReference type="Rhea" id="RHEA-COMP:9708"/>
        <dbReference type="ChEBI" id="CHEBI:30616"/>
        <dbReference type="ChEBI" id="CHEBI:33019"/>
        <dbReference type="ChEBI" id="CHEBI:57762"/>
        <dbReference type="ChEBI" id="CHEBI:78442"/>
        <dbReference type="ChEBI" id="CHEBI:78537"/>
        <dbReference type="ChEBI" id="CHEBI:456215"/>
        <dbReference type="EC" id="6.1.1.9"/>
    </reaction>
</comment>
<comment type="subunit">
    <text evidence="1">Monomer.</text>
</comment>
<comment type="subcellular location">
    <subcellularLocation>
        <location evidence="1">Cytoplasm</location>
    </subcellularLocation>
</comment>
<comment type="domain">
    <text evidence="1">ValRS has two distinct active sites: one for aminoacylation and one for editing. The misactivated threonine is translocated from the active site to the editing site.</text>
</comment>
<comment type="domain">
    <text evidence="1">The C-terminal coiled-coil domain is crucial for aminoacylation activity.</text>
</comment>
<comment type="similarity">
    <text evidence="1">Belongs to the class-I aminoacyl-tRNA synthetase family. ValS type 1 subfamily.</text>
</comment>
<comment type="sequence caution" evidence="2">
    <conflict type="frameshift">
        <sequence resource="EMBL-CDS" id="BAD04103"/>
    </conflict>
</comment>
<name>SYV_ONYPE</name>
<accession>Q6YRJ6</accession>
<dbReference type="EC" id="6.1.1.9" evidence="1"/>
<dbReference type="EMBL" id="AP006628">
    <property type="protein sequence ID" value="BAD04103.1"/>
    <property type="status" value="ALT_FRAME"/>
    <property type="molecule type" value="Genomic_DNA"/>
</dbReference>
<dbReference type="SMR" id="Q6YRJ6"/>
<dbReference type="STRING" id="262768.PAM_018"/>
<dbReference type="KEGG" id="poy:PAM_018"/>
<dbReference type="eggNOG" id="COG0525">
    <property type="taxonomic scope" value="Bacteria"/>
</dbReference>
<dbReference type="HOGENOM" id="CLU_001493_0_2_14"/>
<dbReference type="Proteomes" id="UP000002523">
    <property type="component" value="Chromosome"/>
</dbReference>
<dbReference type="GO" id="GO:0005829">
    <property type="term" value="C:cytosol"/>
    <property type="evidence" value="ECO:0007669"/>
    <property type="project" value="TreeGrafter"/>
</dbReference>
<dbReference type="GO" id="GO:0002161">
    <property type="term" value="F:aminoacyl-tRNA deacylase activity"/>
    <property type="evidence" value="ECO:0007669"/>
    <property type="project" value="InterPro"/>
</dbReference>
<dbReference type="GO" id="GO:0005524">
    <property type="term" value="F:ATP binding"/>
    <property type="evidence" value="ECO:0007669"/>
    <property type="project" value="UniProtKB-UniRule"/>
</dbReference>
<dbReference type="GO" id="GO:0004832">
    <property type="term" value="F:valine-tRNA ligase activity"/>
    <property type="evidence" value="ECO:0007669"/>
    <property type="project" value="UniProtKB-UniRule"/>
</dbReference>
<dbReference type="GO" id="GO:0006438">
    <property type="term" value="P:valyl-tRNA aminoacylation"/>
    <property type="evidence" value="ECO:0007669"/>
    <property type="project" value="UniProtKB-UniRule"/>
</dbReference>
<dbReference type="CDD" id="cd07962">
    <property type="entry name" value="Anticodon_Ia_Val"/>
    <property type="match status" value="1"/>
</dbReference>
<dbReference type="CDD" id="cd00817">
    <property type="entry name" value="ValRS_core"/>
    <property type="match status" value="1"/>
</dbReference>
<dbReference type="FunFam" id="3.40.50.620:FF:000032">
    <property type="entry name" value="Valine--tRNA ligase"/>
    <property type="match status" value="1"/>
</dbReference>
<dbReference type="Gene3D" id="3.40.50.620">
    <property type="entry name" value="HUPs"/>
    <property type="match status" value="2"/>
</dbReference>
<dbReference type="Gene3D" id="1.10.730.10">
    <property type="entry name" value="Isoleucyl-tRNA Synthetase, Domain 1"/>
    <property type="match status" value="1"/>
</dbReference>
<dbReference type="Gene3D" id="1.10.287.380">
    <property type="entry name" value="Valyl-tRNA synthetase, C-terminal domain"/>
    <property type="match status" value="1"/>
</dbReference>
<dbReference type="Gene3D" id="3.90.740.10">
    <property type="entry name" value="Valyl/Leucyl/Isoleucyl-tRNA synthetase, editing domain"/>
    <property type="match status" value="1"/>
</dbReference>
<dbReference type="HAMAP" id="MF_02004">
    <property type="entry name" value="Val_tRNA_synth_type1"/>
    <property type="match status" value="1"/>
</dbReference>
<dbReference type="InterPro" id="IPR001412">
    <property type="entry name" value="aa-tRNA-synth_I_CS"/>
</dbReference>
<dbReference type="InterPro" id="IPR002300">
    <property type="entry name" value="aa-tRNA-synth_Ia"/>
</dbReference>
<dbReference type="InterPro" id="IPR033705">
    <property type="entry name" value="Anticodon_Ia_Val"/>
</dbReference>
<dbReference type="InterPro" id="IPR013155">
    <property type="entry name" value="M/V/L/I-tRNA-synth_anticd-bd"/>
</dbReference>
<dbReference type="InterPro" id="IPR014729">
    <property type="entry name" value="Rossmann-like_a/b/a_fold"/>
</dbReference>
<dbReference type="InterPro" id="IPR010978">
    <property type="entry name" value="tRNA-bd_arm"/>
</dbReference>
<dbReference type="InterPro" id="IPR009080">
    <property type="entry name" value="tRNAsynth_Ia_anticodon-bd"/>
</dbReference>
<dbReference type="InterPro" id="IPR037118">
    <property type="entry name" value="Val-tRNA_synth_C_sf"/>
</dbReference>
<dbReference type="InterPro" id="IPR019499">
    <property type="entry name" value="Val-tRNA_synth_tRNA-bd"/>
</dbReference>
<dbReference type="InterPro" id="IPR009008">
    <property type="entry name" value="Val/Leu/Ile-tRNA-synth_edit"/>
</dbReference>
<dbReference type="InterPro" id="IPR002303">
    <property type="entry name" value="Valyl-tRNA_ligase"/>
</dbReference>
<dbReference type="NCBIfam" id="NF004349">
    <property type="entry name" value="PRK05729.1"/>
    <property type="match status" value="1"/>
</dbReference>
<dbReference type="NCBIfam" id="TIGR00422">
    <property type="entry name" value="valS"/>
    <property type="match status" value="1"/>
</dbReference>
<dbReference type="PANTHER" id="PTHR11946:SF93">
    <property type="entry name" value="VALINE--TRNA LIGASE, CHLOROPLASTIC_MITOCHONDRIAL 2"/>
    <property type="match status" value="1"/>
</dbReference>
<dbReference type="PANTHER" id="PTHR11946">
    <property type="entry name" value="VALYL-TRNA SYNTHETASES"/>
    <property type="match status" value="1"/>
</dbReference>
<dbReference type="Pfam" id="PF08264">
    <property type="entry name" value="Anticodon_1"/>
    <property type="match status" value="1"/>
</dbReference>
<dbReference type="Pfam" id="PF00133">
    <property type="entry name" value="tRNA-synt_1"/>
    <property type="match status" value="2"/>
</dbReference>
<dbReference type="Pfam" id="PF10458">
    <property type="entry name" value="Val_tRNA-synt_C"/>
    <property type="match status" value="1"/>
</dbReference>
<dbReference type="PRINTS" id="PR00986">
    <property type="entry name" value="TRNASYNTHVAL"/>
</dbReference>
<dbReference type="SUPFAM" id="SSF47323">
    <property type="entry name" value="Anticodon-binding domain of a subclass of class I aminoacyl-tRNA synthetases"/>
    <property type="match status" value="1"/>
</dbReference>
<dbReference type="SUPFAM" id="SSF52374">
    <property type="entry name" value="Nucleotidylyl transferase"/>
    <property type="match status" value="1"/>
</dbReference>
<dbReference type="SUPFAM" id="SSF46589">
    <property type="entry name" value="tRNA-binding arm"/>
    <property type="match status" value="1"/>
</dbReference>
<dbReference type="SUPFAM" id="SSF50677">
    <property type="entry name" value="ValRS/IleRS/LeuRS editing domain"/>
    <property type="match status" value="1"/>
</dbReference>
<dbReference type="PROSITE" id="PS00178">
    <property type="entry name" value="AA_TRNA_LIGASE_I"/>
    <property type="match status" value="1"/>
</dbReference>
<reference key="1">
    <citation type="journal article" date="2004" name="Nat. Genet.">
        <title>Reductive evolution suggested from the complete genome sequence of a plant-pathogenic phytoplasma.</title>
        <authorList>
            <person name="Oshima K."/>
            <person name="Kakizawa S."/>
            <person name="Nishigawa H."/>
            <person name="Jung H.-Y."/>
            <person name="Wei W."/>
            <person name="Suzuki S."/>
            <person name="Arashida R."/>
            <person name="Nakata D."/>
            <person name="Miyata S."/>
            <person name="Ugaki M."/>
            <person name="Namba S."/>
        </authorList>
    </citation>
    <scope>NUCLEOTIDE SEQUENCE [LARGE SCALE GENOMIC DNA]</scope>
    <source>
        <strain>OY-M</strain>
    </source>
</reference>